<organism>
    <name type="scientific">Mus musculus</name>
    <name type="common">Mouse</name>
    <dbReference type="NCBI Taxonomy" id="10090"/>
    <lineage>
        <taxon>Eukaryota</taxon>
        <taxon>Metazoa</taxon>
        <taxon>Chordata</taxon>
        <taxon>Craniata</taxon>
        <taxon>Vertebrata</taxon>
        <taxon>Euteleostomi</taxon>
        <taxon>Mammalia</taxon>
        <taxon>Eutheria</taxon>
        <taxon>Euarchontoglires</taxon>
        <taxon>Glires</taxon>
        <taxon>Rodentia</taxon>
        <taxon>Myomorpha</taxon>
        <taxon>Muroidea</taxon>
        <taxon>Muridae</taxon>
        <taxon>Murinae</taxon>
        <taxon>Mus</taxon>
        <taxon>Mus</taxon>
    </lineage>
</organism>
<evidence type="ECO:0000269" key="1">
    <source>
    </source>
</evidence>
<evidence type="ECO:0000303" key="2">
    <source>
    </source>
</evidence>
<evidence type="ECO:0000305" key="3">
    <source>
    </source>
</evidence>
<evidence type="ECO:0000312" key="4">
    <source>
        <dbReference type="MGI" id="MGI:3647683"/>
    </source>
</evidence>
<dbReference type="EC" id="2.3.1.13" evidence="1"/>
<dbReference type="EMBL" id="AC121932">
    <property type="status" value="NOT_ANNOTATED_CDS"/>
    <property type="molecule type" value="Genomic_DNA"/>
</dbReference>
<dbReference type="CCDS" id="CCDS50111.1"/>
<dbReference type="RefSeq" id="NP_001138532.1">
    <property type="nucleotide sequence ID" value="NM_001145060.2"/>
</dbReference>
<dbReference type="RefSeq" id="XP_006524650.1">
    <property type="nucleotide sequence ID" value="XM_006524587.2"/>
</dbReference>
<dbReference type="SMR" id="E9Q5L8"/>
<dbReference type="FunCoup" id="E9Q5L8">
    <property type="interactions" value="6"/>
</dbReference>
<dbReference type="STRING" id="10090.ENSMUSP00000125916"/>
<dbReference type="GlyGen" id="E9Q5L8">
    <property type="glycosylation" value="1 site"/>
</dbReference>
<dbReference type="PhosphoSitePlus" id="E9Q5L8"/>
<dbReference type="PaxDb" id="10090-ENSMUSP00000125916"/>
<dbReference type="ProteomicsDB" id="355057"/>
<dbReference type="Antibodypedia" id="30820">
    <property type="antibodies" value="45 antibodies from 10 providers"/>
</dbReference>
<dbReference type="Ensembl" id="ENSMUST00000166343.3">
    <property type="protein sequence ID" value="ENSMUSP00000125916.2"/>
    <property type="gene ID" value="ENSMUSG00000091043.3"/>
</dbReference>
<dbReference type="GeneID" id="435528"/>
<dbReference type="KEGG" id="mmu:435528"/>
<dbReference type="UCSC" id="uc012atm.1">
    <property type="organism name" value="mouse"/>
</dbReference>
<dbReference type="AGR" id="MGI:3647683"/>
<dbReference type="CTD" id="389396"/>
<dbReference type="MGI" id="MGI:3647683">
    <property type="gene designation" value="Glyatl3"/>
</dbReference>
<dbReference type="VEuPathDB" id="HostDB:ENSMUSG00000091043"/>
<dbReference type="eggNOG" id="ENOG502RFRQ">
    <property type="taxonomic scope" value="Eukaryota"/>
</dbReference>
<dbReference type="GeneTree" id="ENSGT00950000183133"/>
<dbReference type="HOGENOM" id="CLU_060336_0_0_1"/>
<dbReference type="InParanoid" id="E9Q5L8"/>
<dbReference type="OMA" id="AVLNICQ"/>
<dbReference type="OrthoDB" id="61870at2759"/>
<dbReference type="PhylomeDB" id="E9Q5L8"/>
<dbReference type="TreeFam" id="TF353258"/>
<dbReference type="BRENDA" id="2.3.1.13">
    <property type="organism ID" value="3474"/>
</dbReference>
<dbReference type="Reactome" id="R-MMU-177128">
    <property type="pathway name" value="Conjugation of salicylate with glycine"/>
</dbReference>
<dbReference type="Reactome" id="R-MMU-177135">
    <property type="pathway name" value="Conjugation of benzoate with glycine"/>
</dbReference>
<dbReference type="Reactome" id="R-MMU-9749641">
    <property type="pathway name" value="Aspirin ADME"/>
</dbReference>
<dbReference type="BioGRID-ORCS" id="435528">
    <property type="hits" value="3 hits in 77 CRISPR screens"/>
</dbReference>
<dbReference type="PRO" id="PR:E9Q5L8"/>
<dbReference type="Proteomes" id="UP000000589">
    <property type="component" value="Chromosome 17"/>
</dbReference>
<dbReference type="RNAct" id="E9Q5L8">
    <property type="molecule type" value="protein"/>
</dbReference>
<dbReference type="Bgee" id="ENSMUSG00000091043">
    <property type="expression patterns" value="Expressed in epiblast (generic) and 7 other cell types or tissues"/>
</dbReference>
<dbReference type="GO" id="GO:0005739">
    <property type="term" value="C:mitochondrion"/>
    <property type="evidence" value="ECO:0007669"/>
    <property type="project" value="InterPro"/>
</dbReference>
<dbReference type="GO" id="GO:0047961">
    <property type="term" value="F:glycine N-acyltransferase activity"/>
    <property type="evidence" value="ECO:0000314"/>
    <property type="project" value="UniProtKB"/>
</dbReference>
<dbReference type="GO" id="GO:0006629">
    <property type="term" value="P:lipid metabolic process"/>
    <property type="evidence" value="ECO:0007669"/>
    <property type="project" value="UniProtKB-KW"/>
</dbReference>
<dbReference type="FunFam" id="3.40.630.30:FF:000079">
    <property type="entry name" value="glycine N-acyltransferase-like protein 3"/>
    <property type="match status" value="1"/>
</dbReference>
<dbReference type="Gene3D" id="3.40.630.30">
    <property type="match status" value="1"/>
</dbReference>
<dbReference type="InterPro" id="IPR016181">
    <property type="entry name" value="Acyl_CoA_acyltransferase"/>
</dbReference>
<dbReference type="InterPro" id="IPR010313">
    <property type="entry name" value="Glycine_N-acyltransferase"/>
</dbReference>
<dbReference type="InterPro" id="IPR013652">
    <property type="entry name" value="Glycine_N-acyltransferase_C"/>
</dbReference>
<dbReference type="InterPro" id="IPR015938">
    <property type="entry name" value="Glycine_N-acyltransferase_N"/>
</dbReference>
<dbReference type="PANTHER" id="PTHR15298:SF6">
    <property type="entry name" value="GLYCINE N-ACYLTRANSFERASE-LIKE PROTEIN 3"/>
    <property type="match status" value="1"/>
</dbReference>
<dbReference type="PANTHER" id="PTHR15298">
    <property type="entry name" value="L-COA N-ACYLTRANSFERASE-RELATED"/>
    <property type="match status" value="1"/>
</dbReference>
<dbReference type="Pfam" id="PF08444">
    <property type="entry name" value="Gly_acyl_tr_C"/>
    <property type="match status" value="1"/>
</dbReference>
<dbReference type="Pfam" id="PF06021">
    <property type="entry name" value="Gly_acyl_tr_N"/>
    <property type="match status" value="1"/>
</dbReference>
<dbReference type="SUPFAM" id="SSF55729">
    <property type="entry name" value="Acyl-CoA N-acyltransferases (Nat)"/>
    <property type="match status" value="1"/>
</dbReference>
<reference key="1">
    <citation type="submission" date="2002-08" db="EMBL/GenBank/DDBJ databases">
        <title>Genome Sequencing Center, 4444 Forest Park Parkway, St. Louis, MO 63108, USA.</title>
        <authorList>
            <person name="McPherson J.D."/>
            <person name="Waterston R.H."/>
        </authorList>
    </citation>
    <scope>NUCLEOTIDE SEQUENCE [GENOMIC DNA]</scope>
    <source>
        <strain>C57BL/6J</strain>
    </source>
</reference>
<reference key="2">
    <citation type="journal article" date="2009" name="PLoS Biol.">
        <title>Lineage-specific biology revealed by a finished genome assembly of the mouse.</title>
        <authorList>
            <person name="Church D.M."/>
            <person name="Goodstadt L."/>
            <person name="Hillier L.W."/>
            <person name="Zody M.C."/>
            <person name="Goldstein S."/>
            <person name="She X."/>
            <person name="Bult C.J."/>
            <person name="Agarwala R."/>
            <person name="Cherry J.L."/>
            <person name="DiCuccio M."/>
            <person name="Hlavina W."/>
            <person name="Kapustin Y."/>
            <person name="Meric P."/>
            <person name="Maglott D."/>
            <person name="Birtle Z."/>
            <person name="Marques A.C."/>
            <person name="Graves T."/>
            <person name="Zhou S."/>
            <person name="Teague B."/>
            <person name="Potamousis K."/>
            <person name="Churas C."/>
            <person name="Place M."/>
            <person name="Herschleb J."/>
            <person name="Runnheim R."/>
            <person name="Forrest D."/>
            <person name="Amos-Landgraf J."/>
            <person name="Schwartz D.C."/>
            <person name="Cheng Z."/>
            <person name="Lindblad-Toh K."/>
            <person name="Eichler E.E."/>
            <person name="Ponting C.P."/>
        </authorList>
    </citation>
    <scope>NUCLEOTIDE SEQUENCE [LARGE SCALE GENOMIC DNA]</scope>
    <source>
        <strain>C57BL/6J</strain>
    </source>
</reference>
<reference key="3">
    <citation type="journal article" date="2016" name="J. Lipid Res.">
        <title>Glycine N-acyltransferase-like 3 is responsible for long-chain N-acylglycine formation in N18TG2 cells.</title>
        <authorList>
            <person name="Jeffries K.A."/>
            <person name="Dempsey D.R."/>
            <person name="Farrell E.K."/>
            <person name="Anderson R.L."/>
            <person name="Garbade G.J."/>
            <person name="Gurina T.S."/>
            <person name="Gruhonjic I."/>
            <person name="Gunderson C.A."/>
            <person name="Merkler D.J."/>
        </authorList>
    </citation>
    <scope>FUNCTION</scope>
    <scope>CATALYTIC ACTIVITY</scope>
</reference>
<sequence>MLVLKCSTKLFILENMLKSHFPESLKVYGAVMNINRGNPFQKEVVLDSWPNFKVIITRREREAETDNLDHYTNAYAVFYKDIRAYQQLLEEHDVINWDQVFQIQGLQSELYAASKAVAKARLLDLDINLASFKAVHFSPVSSVPDHSFLTGPTPRLTYLSVSDADLLNRTWSRGGNQQCLRYLANLIACFPSVCVRDEKGNPVSWGITDQFATMCHGYTLPDHRRKGYSRLVALTLARKLQSRGFPSQGNVLDDNLASINLLKSVQAEFLPCRFHRLILTPAAFSRQAHL</sequence>
<comment type="function">
    <text evidence="1">Catalyzes the conjugation of long-chain fatty acyl-CoA thioester and glycine to produce long-chain N-(fatty acyl)glycine, an intermediate in the primary fatty acid amide biosynthetic pathway.</text>
</comment>
<comment type="catalytic activity">
    <reaction evidence="1">
        <text>an acyl-CoA + glycine = an N-acylglycine + CoA + H(+)</text>
        <dbReference type="Rhea" id="RHEA:19869"/>
        <dbReference type="ChEBI" id="CHEBI:15378"/>
        <dbReference type="ChEBI" id="CHEBI:57287"/>
        <dbReference type="ChEBI" id="CHEBI:57305"/>
        <dbReference type="ChEBI" id="CHEBI:57670"/>
        <dbReference type="ChEBI" id="CHEBI:58342"/>
        <dbReference type="EC" id="2.3.1.13"/>
    </reaction>
</comment>
<comment type="catalytic activity">
    <reaction evidence="1">
        <text>(9Z)-octadecenoyl-CoA + glycine = N-(9Z-octadecenoyl)glycine + CoA + H(+)</text>
        <dbReference type="Rhea" id="RHEA:51272"/>
        <dbReference type="ChEBI" id="CHEBI:15378"/>
        <dbReference type="ChEBI" id="CHEBI:57287"/>
        <dbReference type="ChEBI" id="CHEBI:57305"/>
        <dbReference type="ChEBI" id="CHEBI:57387"/>
        <dbReference type="ChEBI" id="CHEBI:133992"/>
    </reaction>
    <physiologicalReaction direction="left-to-right" evidence="1">
        <dbReference type="Rhea" id="RHEA:51273"/>
    </physiologicalReaction>
</comment>
<comment type="catalytic activity">
    <reaction evidence="1">
        <text>hexadecanoyl-CoA + glycine = N-hexadecanoylglycine + CoA + H(+)</text>
        <dbReference type="Rhea" id="RHEA:58536"/>
        <dbReference type="ChEBI" id="CHEBI:15378"/>
        <dbReference type="ChEBI" id="CHEBI:57287"/>
        <dbReference type="ChEBI" id="CHEBI:57305"/>
        <dbReference type="ChEBI" id="CHEBI:57379"/>
        <dbReference type="ChEBI" id="CHEBI:142655"/>
    </reaction>
    <physiologicalReaction direction="left-to-right" evidence="1">
        <dbReference type="Rhea" id="RHEA:58537"/>
    </physiologicalReaction>
</comment>
<comment type="pathway">
    <text evidence="1">Lipid metabolism.</text>
</comment>
<keyword id="KW-0012">Acyltransferase</keyword>
<keyword id="KW-0443">Lipid metabolism</keyword>
<keyword id="KW-1185">Reference proteome</keyword>
<keyword id="KW-0808">Transferase</keyword>
<accession>E9Q5L8</accession>
<name>GLYL3_MOUSE</name>
<feature type="chain" id="PRO_0000446855" description="Glycine-N-acyltransferase-like protein 3">
    <location>
        <begin position="1"/>
        <end position="290"/>
    </location>
</feature>
<gene>
    <name evidence="2 4" type="primary">Glyatl3</name>
</gene>
<proteinExistence type="evidence at protein level"/>
<protein>
    <recommendedName>
        <fullName evidence="2">Glycine-N-acyltransferase-like protein 3</fullName>
        <ecNumber evidence="1">2.3.1.13</ecNumber>
    </recommendedName>
    <alternativeName>
        <fullName evidence="3">Acyl-CoA:glycine-N-acyltransferase-like protein 3</fullName>
    </alternativeName>
</protein>